<accession>B0V8Y6</accession>
<protein>
    <recommendedName>
        <fullName evidence="1">Acetylglutamate kinase</fullName>
        <ecNumber evidence="1">2.7.2.8</ecNumber>
    </recommendedName>
    <alternativeName>
        <fullName evidence="1">N-acetyl-L-glutamate 5-phosphotransferase</fullName>
    </alternativeName>
    <alternativeName>
        <fullName evidence="1">NAG kinase</fullName>
        <shortName evidence="1">NAGK</shortName>
    </alternativeName>
</protein>
<dbReference type="EC" id="2.7.2.8" evidence="1"/>
<dbReference type="EMBL" id="CU459141">
    <property type="protein sequence ID" value="CAM87749.1"/>
    <property type="molecule type" value="Genomic_DNA"/>
</dbReference>
<dbReference type="RefSeq" id="WP_001135419.1">
    <property type="nucleotide sequence ID" value="NZ_JBDGFB010000015.1"/>
</dbReference>
<dbReference type="SMR" id="B0V8Y6"/>
<dbReference type="EnsemblBacteria" id="CAM87749">
    <property type="protein sequence ID" value="CAM87749"/>
    <property type="gene ID" value="ABAYE2927"/>
</dbReference>
<dbReference type="GeneID" id="92892817"/>
<dbReference type="KEGG" id="aby:ABAYE2927"/>
<dbReference type="HOGENOM" id="CLU_053680_0_0_6"/>
<dbReference type="UniPathway" id="UPA00068">
    <property type="reaction ID" value="UER00107"/>
</dbReference>
<dbReference type="GO" id="GO:0005737">
    <property type="term" value="C:cytoplasm"/>
    <property type="evidence" value="ECO:0007669"/>
    <property type="project" value="UniProtKB-SubCell"/>
</dbReference>
<dbReference type="GO" id="GO:0003991">
    <property type="term" value="F:acetylglutamate kinase activity"/>
    <property type="evidence" value="ECO:0007669"/>
    <property type="project" value="UniProtKB-UniRule"/>
</dbReference>
<dbReference type="GO" id="GO:0005524">
    <property type="term" value="F:ATP binding"/>
    <property type="evidence" value="ECO:0007669"/>
    <property type="project" value="UniProtKB-UniRule"/>
</dbReference>
<dbReference type="GO" id="GO:0042450">
    <property type="term" value="P:arginine biosynthetic process via ornithine"/>
    <property type="evidence" value="ECO:0007669"/>
    <property type="project" value="UniProtKB-UniRule"/>
</dbReference>
<dbReference type="GO" id="GO:0006526">
    <property type="term" value="P:L-arginine biosynthetic process"/>
    <property type="evidence" value="ECO:0007669"/>
    <property type="project" value="UniProtKB-UniPathway"/>
</dbReference>
<dbReference type="CDD" id="cd04250">
    <property type="entry name" value="AAK_NAGK-C"/>
    <property type="match status" value="1"/>
</dbReference>
<dbReference type="FunFam" id="3.40.1160.10:FF:000004">
    <property type="entry name" value="Acetylglutamate kinase"/>
    <property type="match status" value="1"/>
</dbReference>
<dbReference type="Gene3D" id="3.40.1160.10">
    <property type="entry name" value="Acetylglutamate kinase-like"/>
    <property type="match status" value="1"/>
</dbReference>
<dbReference type="HAMAP" id="MF_00082">
    <property type="entry name" value="ArgB"/>
    <property type="match status" value="1"/>
</dbReference>
<dbReference type="InterPro" id="IPR036393">
    <property type="entry name" value="AceGlu_kinase-like_sf"/>
</dbReference>
<dbReference type="InterPro" id="IPR004662">
    <property type="entry name" value="AcgluKinase_fam"/>
</dbReference>
<dbReference type="InterPro" id="IPR037528">
    <property type="entry name" value="ArgB"/>
</dbReference>
<dbReference type="InterPro" id="IPR001048">
    <property type="entry name" value="Asp/Glu/Uridylate_kinase"/>
</dbReference>
<dbReference type="InterPro" id="IPR041727">
    <property type="entry name" value="NAGK-C"/>
</dbReference>
<dbReference type="NCBIfam" id="TIGR00761">
    <property type="entry name" value="argB"/>
    <property type="match status" value="1"/>
</dbReference>
<dbReference type="PANTHER" id="PTHR23342">
    <property type="entry name" value="N-ACETYLGLUTAMATE SYNTHASE"/>
    <property type="match status" value="1"/>
</dbReference>
<dbReference type="PANTHER" id="PTHR23342:SF0">
    <property type="entry name" value="N-ACETYLGLUTAMATE SYNTHASE, MITOCHONDRIAL"/>
    <property type="match status" value="1"/>
</dbReference>
<dbReference type="Pfam" id="PF00696">
    <property type="entry name" value="AA_kinase"/>
    <property type="match status" value="1"/>
</dbReference>
<dbReference type="PIRSF" id="PIRSF000728">
    <property type="entry name" value="NAGK"/>
    <property type="match status" value="1"/>
</dbReference>
<dbReference type="SUPFAM" id="SSF53633">
    <property type="entry name" value="Carbamate kinase-like"/>
    <property type="match status" value="1"/>
</dbReference>
<proteinExistence type="inferred from homology"/>
<sequence>MPQDQHLGVDKAKILIEALPYIQRFSGKTLVVKYGGNAMTDPELESSFARDIVLLKTVGLNPIVVHGGGPQVDSFLKQLGRESDRIDGMRVTDEATMEVVEMVLGGSVNKSIVNLINKHGGRAIGLTGQDGNLLRARKLLMEKQEEDGSIKHIDLGMVGEVTGVKTDVLEMFTQSDFIPVIAPLGVDEKGNTYNINADLVAGKVAEALGAEKLILLTNISGVLDENKNLLTGLTTQEVDRLIETGVIYGGMIPKVGCALDAVKGGVVSAHIVDGRVPHATLLEIFTDHGVGTLISNRTQTTH</sequence>
<organism>
    <name type="scientific">Acinetobacter baumannii (strain AYE)</name>
    <dbReference type="NCBI Taxonomy" id="509173"/>
    <lineage>
        <taxon>Bacteria</taxon>
        <taxon>Pseudomonadati</taxon>
        <taxon>Pseudomonadota</taxon>
        <taxon>Gammaproteobacteria</taxon>
        <taxon>Moraxellales</taxon>
        <taxon>Moraxellaceae</taxon>
        <taxon>Acinetobacter</taxon>
        <taxon>Acinetobacter calcoaceticus/baumannii complex</taxon>
    </lineage>
</organism>
<evidence type="ECO:0000255" key="1">
    <source>
        <dbReference type="HAMAP-Rule" id="MF_00082"/>
    </source>
</evidence>
<keyword id="KW-0028">Amino-acid biosynthesis</keyword>
<keyword id="KW-0055">Arginine biosynthesis</keyword>
<keyword id="KW-0067">ATP-binding</keyword>
<keyword id="KW-0963">Cytoplasm</keyword>
<keyword id="KW-0418">Kinase</keyword>
<keyword id="KW-0547">Nucleotide-binding</keyword>
<keyword id="KW-0808">Transferase</keyword>
<comment type="function">
    <text evidence="1">Catalyzes the ATP-dependent phosphorylation of N-acetyl-L-glutamate.</text>
</comment>
<comment type="catalytic activity">
    <reaction evidence="1">
        <text>N-acetyl-L-glutamate + ATP = N-acetyl-L-glutamyl 5-phosphate + ADP</text>
        <dbReference type="Rhea" id="RHEA:14629"/>
        <dbReference type="ChEBI" id="CHEBI:30616"/>
        <dbReference type="ChEBI" id="CHEBI:44337"/>
        <dbReference type="ChEBI" id="CHEBI:57936"/>
        <dbReference type="ChEBI" id="CHEBI:456216"/>
        <dbReference type="EC" id="2.7.2.8"/>
    </reaction>
</comment>
<comment type="pathway">
    <text evidence="1">Amino-acid biosynthesis; L-arginine biosynthesis; N(2)-acetyl-L-ornithine from L-glutamate: step 2/4.</text>
</comment>
<comment type="subcellular location">
    <subcellularLocation>
        <location evidence="1">Cytoplasm</location>
    </subcellularLocation>
</comment>
<comment type="similarity">
    <text evidence="1">Belongs to the acetylglutamate kinase family. ArgB subfamily.</text>
</comment>
<feature type="chain" id="PRO_1000092843" description="Acetylglutamate kinase">
    <location>
        <begin position="1"/>
        <end position="302"/>
    </location>
</feature>
<feature type="binding site" evidence="1">
    <location>
        <begin position="68"/>
        <end position="69"/>
    </location>
    <ligand>
        <name>substrate</name>
    </ligand>
</feature>
<feature type="binding site" evidence="1">
    <location>
        <position position="90"/>
    </location>
    <ligand>
        <name>substrate</name>
    </ligand>
</feature>
<feature type="binding site" evidence="1">
    <location>
        <position position="194"/>
    </location>
    <ligand>
        <name>substrate</name>
    </ligand>
</feature>
<feature type="site" description="Transition state stabilizer" evidence="1">
    <location>
        <position position="33"/>
    </location>
</feature>
<feature type="site" description="Transition state stabilizer" evidence="1">
    <location>
        <position position="254"/>
    </location>
</feature>
<gene>
    <name evidence="1" type="primary">argB</name>
    <name type="ordered locus">ABAYE2927</name>
</gene>
<reference key="1">
    <citation type="journal article" date="2008" name="PLoS ONE">
        <title>Comparative analysis of Acinetobacters: three genomes for three lifestyles.</title>
        <authorList>
            <person name="Vallenet D."/>
            <person name="Nordmann P."/>
            <person name="Barbe V."/>
            <person name="Poirel L."/>
            <person name="Mangenot S."/>
            <person name="Bataille E."/>
            <person name="Dossat C."/>
            <person name="Gas S."/>
            <person name="Kreimeyer A."/>
            <person name="Lenoble P."/>
            <person name="Oztas S."/>
            <person name="Poulain J."/>
            <person name="Segurens B."/>
            <person name="Robert C."/>
            <person name="Abergel C."/>
            <person name="Claverie J.-M."/>
            <person name="Raoult D."/>
            <person name="Medigue C."/>
            <person name="Weissenbach J."/>
            <person name="Cruveiller S."/>
        </authorList>
    </citation>
    <scope>NUCLEOTIDE SEQUENCE [LARGE SCALE GENOMIC DNA]</scope>
    <source>
        <strain>AYE</strain>
    </source>
</reference>
<name>ARGB_ACIBY</name>